<comment type="function">
    <text evidence="1 3">Component of the small ribosomal subunit. The ribosome is a large ribonucleoprotein complex responsible for the synthesis of proteins in the cell. Part of the small subunit (SSU) processome, first precursor of the small eukaryotic ribosomal subunit. During the assembly of the SSU processome in the nucleolus, many ribosome biogenesis factors, an RNA chaperone and ribosomal proteins associate with the nascent pre-rRNA and work in concert to generate RNA folding, modifications, rearrangements and cleavage as well as targeted degradation of pre-ribosomal RNA by the RNA exosome (By similarity). May play a role during erythropoiesis (By similarity).</text>
</comment>
<comment type="subunit">
    <text evidence="1">Component of the small ribosomal subunit. Mature ribosomes consist of a small (40S) and a large (60S) subunit. The 40S subunit contains about 33 different proteins and 1 molecule of RNA (18S). The 60S subunit contains about 49 different proteins and 3 molecules of RNA (28S, 5.8S and 5S). Part of the small subunit (SSU) processome, composed of more than 70 proteins and the RNA chaperone small nucleolar RNA (snoRNA) U3.</text>
</comment>
<comment type="subcellular location">
    <subcellularLocation>
        <location evidence="2 3">Cytoplasm</location>
    </subcellularLocation>
    <subcellularLocation>
        <location evidence="2 3">Nucleus</location>
    </subcellularLocation>
    <subcellularLocation>
        <location evidence="1">Nucleus</location>
        <location evidence="1">Nucleolus</location>
    </subcellularLocation>
</comment>
<comment type="similarity">
    <text evidence="3">Belongs to the eukaryotic ribosomal protein eS1 family.</text>
</comment>
<keyword id="KW-0963">Cytoplasm</keyword>
<keyword id="KW-0539">Nucleus</keyword>
<keyword id="KW-0687">Ribonucleoprotein</keyword>
<keyword id="KW-0689">Ribosomal protein</keyword>
<accession>Q98TX2</accession>
<evidence type="ECO:0000250" key="1">
    <source>
        <dbReference type="UniProtKB" id="P61247"/>
    </source>
</evidence>
<evidence type="ECO:0000250" key="2">
    <source>
        <dbReference type="UniProtKB" id="P97351"/>
    </source>
</evidence>
<evidence type="ECO:0000255" key="3">
    <source>
        <dbReference type="HAMAP-Rule" id="MF_03122"/>
    </source>
</evidence>
<evidence type="ECO:0000256" key="4">
    <source>
        <dbReference type="SAM" id="MobiDB-lite"/>
    </source>
</evidence>
<evidence type="ECO:0000305" key="5"/>
<gene>
    <name evidence="3" type="primary">RPS3A</name>
</gene>
<proteinExistence type="evidence at transcript level"/>
<reference key="1">
    <citation type="submission" date="2000-11" db="EMBL/GenBank/DDBJ databases">
        <title>Molecular cloning of Ophiophagus hannah venom gland ribosomal protein S3a.</title>
        <authorList>
            <person name="Lee W."/>
            <person name="Liu H."/>
            <person name="Zhang Y."/>
        </authorList>
    </citation>
    <scope>NUCLEOTIDE SEQUENCE [MRNA]</scope>
    <source>
        <tissue>Venom gland</tissue>
    </source>
</reference>
<organism>
    <name type="scientific">Ophiophagus hannah</name>
    <name type="common">King cobra</name>
    <name type="synonym">Naja hannah</name>
    <dbReference type="NCBI Taxonomy" id="8665"/>
    <lineage>
        <taxon>Eukaryota</taxon>
        <taxon>Metazoa</taxon>
        <taxon>Chordata</taxon>
        <taxon>Craniata</taxon>
        <taxon>Vertebrata</taxon>
        <taxon>Euteleostomi</taxon>
        <taxon>Lepidosauria</taxon>
        <taxon>Squamata</taxon>
        <taxon>Bifurcata</taxon>
        <taxon>Unidentata</taxon>
        <taxon>Episquamata</taxon>
        <taxon>Toxicofera</taxon>
        <taxon>Serpentes</taxon>
        <taxon>Colubroidea</taxon>
        <taxon>Elapidae</taxon>
        <taxon>Elapinae</taxon>
        <taxon>Ophiophagus</taxon>
    </lineage>
</organism>
<feature type="initiator methionine" description="Removed" evidence="3">
    <location>
        <position position="1"/>
    </location>
</feature>
<feature type="chain" id="PRO_0000230768" description="Small ribosomal subunit protein eS1">
    <location>
        <begin position="2"/>
        <end position="264"/>
    </location>
</feature>
<feature type="region of interest" description="Disordered" evidence="4">
    <location>
        <begin position="232"/>
        <end position="264"/>
    </location>
</feature>
<feature type="compositionally biased region" description="Basic and acidic residues" evidence="4">
    <location>
        <begin position="242"/>
        <end position="255"/>
    </location>
</feature>
<sequence length="264" mass="29894">MAVGKNKRLTKGGKKGAKKKVVDPFSKKDWYDVKAPAMFNIRNIGKTLVTRTQGTKIASDGLKGRVFEVSLADLQNDEVAFRKFKLITEDVQGKNCLINFHGMDLTRDKMCSMVKKWQTMIEAHIDVKTTDGYLLRLFCVGFTKKRTNQIRKTSYAQHQQVRQIRKKMVEIMTREVQTNDLKEVVNKLIPDSIGKDIEKACQSIYPLHDVYVRKVKMLKKPKFELGKLMELHGEGGGSGKPSGDETGAKVERADGYEPPVQESV</sequence>
<name>RS3A_OPHHA</name>
<dbReference type="EMBL" id="AF321768">
    <property type="protein sequence ID" value="AAK09383.1"/>
    <property type="molecule type" value="mRNA"/>
</dbReference>
<dbReference type="SMR" id="Q98TX2"/>
<dbReference type="GO" id="GO:0022627">
    <property type="term" value="C:cytosolic small ribosomal subunit"/>
    <property type="evidence" value="ECO:0007669"/>
    <property type="project" value="UniProtKB-UniRule"/>
</dbReference>
<dbReference type="GO" id="GO:0005730">
    <property type="term" value="C:nucleolus"/>
    <property type="evidence" value="ECO:0007669"/>
    <property type="project" value="UniProtKB-SubCell"/>
</dbReference>
<dbReference type="GO" id="GO:0032040">
    <property type="term" value="C:small-subunit processome"/>
    <property type="evidence" value="ECO:0000250"/>
    <property type="project" value="UniProtKB"/>
</dbReference>
<dbReference type="GO" id="GO:0003735">
    <property type="term" value="F:structural constituent of ribosome"/>
    <property type="evidence" value="ECO:0007669"/>
    <property type="project" value="UniProtKB-UniRule"/>
</dbReference>
<dbReference type="GO" id="GO:0042274">
    <property type="term" value="P:ribosomal small subunit biogenesis"/>
    <property type="evidence" value="ECO:0000250"/>
    <property type="project" value="UniProtKB"/>
</dbReference>
<dbReference type="GO" id="GO:0006412">
    <property type="term" value="P:translation"/>
    <property type="evidence" value="ECO:0007669"/>
    <property type="project" value="UniProtKB-UniRule"/>
</dbReference>
<dbReference type="HAMAP" id="MF_03122">
    <property type="entry name" value="Ribosomal_eS1_euk"/>
    <property type="match status" value="1"/>
</dbReference>
<dbReference type="InterPro" id="IPR001593">
    <property type="entry name" value="Ribosomal_eS1"/>
</dbReference>
<dbReference type="InterPro" id="IPR018281">
    <property type="entry name" value="Ribosomal_eS1_CS"/>
</dbReference>
<dbReference type="InterPro" id="IPR027500">
    <property type="entry name" value="Ribosomal_eS1_euk"/>
</dbReference>
<dbReference type="PANTHER" id="PTHR11830">
    <property type="entry name" value="40S RIBOSOMAL PROTEIN S3A"/>
    <property type="match status" value="1"/>
</dbReference>
<dbReference type="Pfam" id="PF01015">
    <property type="entry name" value="Ribosomal_S3Ae"/>
    <property type="match status" value="1"/>
</dbReference>
<dbReference type="SMART" id="SM01397">
    <property type="entry name" value="Ribosomal_S3Ae"/>
    <property type="match status" value="1"/>
</dbReference>
<dbReference type="PROSITE" id="PS01191">
    <property type="entry name" value="RIBOSOMAL_S3AE"/>
    <property type="match status" value="1"/>
</dbReference>
<protein>
    <recommendedName>
        <fullName evidence="3">Small ribosomal subunit protein eS1</fullName>
    </recommendedName>
    <alternativeName>
        <fullName evidence="5">40S ribosomal protein S3a</fullName>
    </alternativeName>
</protein>